<comment type="function">
    <text evidence="1">Catalyzes the dephosphorylation of undecaprenyl diphosphate (UPP). Confers resistance to bacitracin.</text>
</comment>
<comment type="catalytic activity">
    <reaction evidence="1">
        <text>di-trans,octa-cis-undecaprenyl diphosphate + H2O = di-trans,octa-cis-undecaprenyl phosphate + phosphate + H(+)</text>
        <dbReference type="Rhea" id="RHEA:28094"/>
        <dbReference type="ChEBI" id="CHEBI:15377"/>
        <dbReference type="ChEBI" id="CHEBI:15378"/>
        <dbReference type="ChEBI" id="CHEBI:43474"/>
        <dbReference type="ChEBI" id="CHEBI:58405"/>
        <dbReference type="ChEBI" id="CHEBI:60392"/>
        <dbReference type="EC" id="3.6.1.27"/>
    </reaction>
</comment>
<comment type="subcellular location">
    <subcellularLocation>
        <location evidence="1">Cell inner membrane</location>
        <topology evidence="1">Multi-pass membrane protein</topology>
    </subcellularLocation>
</comment>
<comment type="miscellaneous">
    <text>Bacitracin is thought to be involved in the inhibition of peptidoglycan synthesis by sequestering undecaprenyl diphosphate, thereby reducing the pool of lipid carrier available.</text>
</comment>
<comment type="similarity">
    <text evidence="1">Belongs to the UppP family.</text>
</comment>
<accession>A0LG71</accession>
<organism>
    <name type="scientific">Syntrophobacter fumaroxidans (strain DSM 10017 / MPOB)</name>
    <dbReference type="NCBI Taxonomy" id="335543"/>
    <lineage>
        <taxon>Bacteria</taxon>
        <taxon>Pseudomonadati</taxon>
        <taxon>Thermodesulfobacteriota</taxon>
        <taxon>Syntrophobacteria</taxon>
        <taxon>Syntrophobacterales</taxon>
        <taxon>Syntrophobacteraceae</taxon>
        <taxon>Syntrophobacter</taxon>
    </lineage>
</organism>
<evidence type="ECO:0000255" key="1">
    <source>
        <dbReference type="HAMAP-Rule" id="MF_01006"/>
    </source>
</evidence>
<feature type="chain" id="PRO_0000290776" description="Undecaprenyl-diphosphatase">
    <location>
        <begin position="1"/>
        <end position="281"/>
    </location>
</feature>
<feature type="transmembrane region" description="Helical" evidence="1">
    <location>
        <begin position="1"/>
        <end position="21"/>
    </location>
</feature>
<feature type="transmembrane region" description="Helical" evidence="1">
    <location>
        <begin position="45"/>
        <end position="65"/>
    </location>
</feature>
<feature type="transmembrane region" description="Helical" evidence="1">
    <location>
        <begin position="93"/>
        <end position="113"/>
    </location>
</feature>
<feature type="transmembrane region" description="Helical" evidence="1">
    <location>
        <begin position="125"/>
        <end position="145"/>
    </location>
</feature>
<feature type="transmembrane region" description="Helical" evidence="1">
    <location>
        <begin position="155"/>
        <end position="175"/>
    </location>
</feature>
<feature type="transmembrane region" description="Helical" evidence="1">
    <location>
        <begin position="195"/>
        <end position="215"/>
    </location>
</feature>
<feature type="transmembrane region" description="Helical" evidence="1">
    <location>
        <begin position="227"/>
        <end position="247"/>
    </location>
</feature>
<feature type="transmembrane region" description="Helical" evidence="1">
    <location>
        <begin position="256"/>
        <end position="276"/>
    </location>
</feature>
<keyword id="KW-0046">Antibiotic resistance</keyword>
<keyword id="KW-0997">Cell inner membrane</keyword>
<keyword id="KW-1003">Cell membrane</keyword>
<keyword id="KW-0133">Cell shape</keyword>
<keyword id="KW-0961">Cell wall biogenesis/degradation</keyword>
<keyword id="KW-0378">Hydrolase</keyword>
<keyword id="KW-0472">Membrane</keyword>
<keyword id="KW-0573">Peptidoglycan synthesis</keyword>
<keyword id="KW-1185">Reference proteome</keyword>
<keyword id="KW-0812">Transmembrane</keyword>
<keyword id="KW-1133">Transmembrane helix</keyword>
<proteinExistence type="inferred from homology"/>
<protein>
    <recommendedName>
        <fullName evidence="1">Undecaprenyl-diphosphatase</fullName>
        <ecNumber evidence="1">3.6.1.27</ecNumber>
    </recommendedName>
    <alternativeName>
        <fullName evidence="1">Bacitracin resistance protein</fullName>
    </alternativeName>
    <alternativeName>
        <fullName evidence="1">Undecaprenyl pyrophosphate phosphatase</fullName>
    </alternativeName>
</protein>
<dbReference type="EC" id="3.6.1.27" evidence="1"/>
<dbReference type="EMBL" id="CP000478">
    <property type="protein sequence ID" value="ABK16423.1"/>
    <property type="molecule type" value="Genomic_DNA"/>
</dbReference>
<dbReference type="RefSeq" id="WP_011697596.1">
    <property type="nucleotide sequence ID" value="NC_008554.1"/>
</dbReference>
<dbReference type="SMR" id="A0LG71"/>
<dbReference type="FunCoup" id="A0LG71">
    <property type="interactions" value="347"/>
</dbReference>
<dbReference type="STRING" id="335543.Sfum_0725"/>
<dbReference type="KEGG" id="sfu:Sfum_0725"/>
<dbReference type="eggNOG" id="COG1968">
    <property type="taxonomic scope" value="Bacteria"/>
</dbReference>
<dbReference type="HOGENOM" id="CLU_060296_1_0_7"/>
<dbReference type="InParanoid" id="A0LG71"/>
<dbReference type="OrthoDB" id="9808289at2"/>
<dbReference type="Proteomes" id="UP000001784">
    <property type="component" value="Chromosome"/>
</dbReference>
<dbReference type="GO" id="GO:0005886">
    <property type="term" value="C:plasma membrane"/>
    <property type="evidence" value="ECO:0007669"/>
    <property type="project" value="UniProtKB-SubCell"/>
</dbReference>
<dbReference type="GO" id="GO:0050380">
    <property type="term" value="F:undecaprenyl-diphosphatase activity"/>
    <property type="evidence" value="ECO:0007669"/>
    <property type="project" value="UniProtKB-UniRule"/>
</dbReference>
<dbReference type="GO" id="GO:0071555">
    <property type="term" value="P:cell wall organization"/>
    <property type="evidence" value="ECO:0007669"/>
    <property type="project" value="UniProtKB-KW"/>
</dbReference>
<dbReference type="GO" id="GO:0009252">
    <property type="term" value="P:peptidoglycan biosynthetic process"/>
    <property type="evidence" value="ECO:0007669"/>
    <property type="project" value="UniProtKB-KW"/>
</dbReference>
<dbReference type="GO" id="GO:0008360">
    <property type="term" value="P:regulation of cell shape"/>
    <property type="evidence" value="ECO:0007669"/>
    <property type="project" value="UniProtKB-KW"/>
</dbReference>
<dbReference type="GO" id="GO:0046677">
    <property type="term" value="P:response to antibiotic"/>
    <property type="evidence" value="ECO:0007669"/>
    <property type="project" value="UniProtKB-UniRule"/>
</dbReference>
<dbReference type="HAMAP" id="MF_01006">
    <property type="entry name" value="Undec_diphosphatase"/>
    <property type="match status" value="1"/>
</dbReference>
<dbReference type="InterPro" id="IPR003824">
    <property type="entry name" value="UppP"/>
</dbReference>
<dbReference type="NCBIfam" id="TIGR00753">
    <property type="entry name" value="undec_PP_bacA"/>
    <property type="match status" value="1"/>
</dbReference>
<dbReference type="PANTHER" id="PTHR30622">
    <property type="entry name" value="UNDECAPRENYL-DIPHOSPHATASE"/>
    <property type="match status" value="1"/>
</dbReference>
<dbReference type="PANTHER" id="PTHR30622:SF4">
    <property type="entry name" value="UNDECAPRENYL-DIPHOSPHATASE"/>
    <property type="match status" value="1"/>
</dbReference>
<dbReference type="Pfam" id="PF02673">
    <property type="entry name" value="BacA"/>
    <property type="match status" value="1"/>
</dbReference>
<gene>
    <name evidence="1" type="primary">uppP</name>
    <name type="ordered locus">Sfum_0725</name>
</gene>
<reference key="1">
    <citation type="submission" date="2006-10" db="EMBL/GenBank/DDBJ databases">
        <title>Complete sequence of Syntrophobacter fumaroxidans MPOB.</title>
        <authorList>
            <consortium name="US DOE Joint Genome Institute"/>
            <person name="Copeland A."/>
            <person name="Lucas S."/>
            <person name="Lapidus A."/>
            <person name="Barry K."/>
            <person name="Detter J.C."/>
            <person name="Glavina del Rio T."/>
            <person name="Hammon N."/>
            <person name="Israni S."/>
            <person name="Pitluck S."/>
            <person name="Goltsman E.G."/>
            <person name="Martinez M."/>
            <person name="Schmutz J."/>
            <person name="Larimer F."/>
            <person name="Land M."/>
            <person name="Hauser L."/>
            <person name="Kyrpides N."/>
            <person name="Kim E."/>
            <person name="Boone D.R."/>
            <person name="Brockman F."/>
            <person name="Culley D."/>
            <person name="Ferry J."/>
            <person name="Gunsalus R."/>
            <person name="McInerney M.J."/>
            <person name="Morrison M."/>
            <person name="Plugge C."/>
            <person name="Rohlin L."/>
            <person name="Scholten J."/>
            <person name="Sieber J."/>
            <person name="Stams A.J.M."/>
            <person name="Worm P."/>
            <person name="Henstra A.M."/>
            <person name="Richardson P."/>
        </authorList>
    </citation>
    <scope>NUCLEOTIDE SEQUENCE [LARGE SCALE GENOMIC DNA]</scope>
    <source>
        <strain>DSM 10017 / MPOB</strain>
    </source>
</reference>
<name>UPPP_SYNFM</name>
<sequence>MNVLQGLLLGLIQGLTEFLPISSTAHLTLAGKWMGVVSAEHPEHWTAFIAVIQLGTMAAVLIYFARDVLDISLTFLEENVFRRMRFKDQSHVSKLGWYVILGSLPVATFGLVFKKVIEGSLTKSLIVISASLIVFGILLGVSEVVARFSKSIKRISWLDALVVGFAQVMALVPGASRSGTTITAGLFMGMTRETAARFSFLLSIPAVMASGLLEFRESLDFMGSQDFLVLASATLMSAVSGYLTIAFLLRFLRRHSTNVFVVYRVVLGGALLWMVFRHGVV</sequence>